<organism>
    <name type="scientific">Arabidopsis thaliana</name>
    <name type="common">Mouse-ear cress</name>
    <dbReference type="NCBI Taxonomy" id="3702"/>
    <lineage>
        <taxon>Eukaryota</taxon>
        <taxon>Viridiplantae</taxon>
        <taxon>Streptophyta</taxon>
        <taxon>Embryophyta</taxon>
        <taxon>Tracheophyta</taxon>
        <taxon>Spermatophyta</taxon>
        <taxon>Magnoliopsida</taxon>
        <taxon>eudicotyledons</taxon>
        <taxon>Gunneridae</taxon>
        <taxon>Pentapetalae</taxon>
        <taxon>rosids</taxon>
        <taxon>malvids</taxon>
        <taxon>Brassicales</taxon>
        <taxon>Brassicaceae</taxon>
        <taxon>Camelineae</taxon>
        <taxon>Arabidopsis</taxon>
    </lineage>
</organism>
<evidence type="ECO:0000255" key="1">
    <source>
        <dbReference type="HAMAP-Rule" id="MF_03186"/>
    </source>
</evidence>
<evidence type="ECO:0000256" key="2">
    <source>
        <dbReference type="SAM" id="MobiDB-lite"/>
    </source>
</evidence>
<evidence type="ECO:0000269" key="3">
    <source>
    </source>
</evidence>
<evidence type="ECO:0000305" key="4"/>
<keyword id="KW-0021">Allosteric enzyme</keyword>
<keyword id="KW-0067">ATP-binding</keyword>
<keyword id="KW-0963">Cytoplasm</keyword>
<keyword id="KW-0324">Glycolysis</keyword>
<keyword id="KW-0418">Kinase</keyword>
<keyword id="KW-0460">Magnesium</keyword>
<keyword id="KW-0479">Metal-binding</keyword>
<keyword id="KW-0547">Nucleotide-binding</keyword>
<keyword id="KW-1185">Reference proteome</keyword>
<keyword id="KW-0808">Transferase</keyword>
<gene>
    <name evidence="1" type="primary">PFK7</name>
    <name type="ordered locus">At5g56630</name>
    <name type="ORF">MIK19.8</name>
</gene>
<feature type="chain" id="PRO_0000330774" description="ATP-dependent 6-phosphofructokinase 7">
    <location>
        <begin position="1"/>
        <end position="485"/>
    </location>
</feature>
<feature type="region of interest" description="Disordered" evidence="2">
    <location>
        <begin position="449"/>
        <end position="485"/>
    </location>
</feature>
<feature type="compositionally biased region" description="Basic and acidic residues" evidence="2">
    <location>
        <begin position="455"/>
        <end position="464"/>
    </location>
</feature>
<feature type="active site" description="Proton acceptor" evidence="1">
    <location>
        <position position="220"/>
    </location>
</feature>
<feature type="binding site" evidence="1">
    <location>
        <position position="101"/>
    </location>
    <ligand>
        <name>ATP</name>
        <dbReference type="ChEBI" id="CHEBI:30616"/>
    </ligand>
</feature>
<feature type="binding site" evidence="1">
    <location>
        <begin position="164"/>
        <end position="165"/>
    </location>
    <ligand>
        <name>ATP</name>
        <dbReference type="ChEBI" id="CHEBI:30616"/>
    </ligand>
</feature>
<feature type="binding site" evidence="1">
    <location>
        <begin position="189"/>
        <end position="192"/>
    </location>
    <ligand>
        <name>ATP</name>
        <dbReference type="ChEBI" id="CHEBI:30616"/>
    </ligand>
</feature>
<feature type="binding site" evidence="1">
    <location>
        <position position="190"/>
    </location>
    <ligand>
        <name>Mg(2+)</name>
        <dbReference type="ChEBI" id="CHEBI:18420"/>
        <note>catalytic</note>
    </ligand>
</feature>
<feature type="binding site" evidence="1">
    <location>
        <begin position="218"/>
        <end position="220"/>
    </location>
    <ligand>
        <name>substrate</name>
    </ligand>
</feature>
<feature type="binding site" evidence="1">
    <location>
        <begin position="263"/>
        <end position="265"/>
    </location>
    <ligand>
        <name>substrate</name>
    </ligand>
</feature>
<feature type="binding site" evidence="1">
    <location>
        <position position="319"/>
    </location>
    <ligand>
        <name>substrate</name>
    </ligand>
</feature>
<feature type="binding site" evidence="1">
    <location>
        <begin position="374"/>
        <end position="377"/>
    </location>
    <ligand>
        <name>substrate</name>
    </ligand>
</feature>
<feature type="site" description="Important for substrate specificity; cannot use PPi as phosphoryl donor" evidence="1">
    <location>
        <position position="191"/>
    </location>
</feature>
<sequence length="485" mass="53482">MSSPRSNKPKIVNGPGGYILQDVPHLIDYLPDLPTYPNPLQDNPAYSVVKQYFVHADDSVPEKVVVHKDGPRGVHFRRAGPRQKVYFESDEVHACIVTCGGLCPGLNTVIREVVSSLSYMYGVKRILGIDGGYRGFYAKNTIPLNSKVVNDIHKRGGTIIGTSRGGHDTNKIVDSIQDRGINQVYIIGGDGTQRGASVIFEEIRRRRLKVAVVGIPKTIDNDIPVIDKSFGFDTAVEEAQRAINAAHVEAESNENGIGFVKLMGRYSGYIAMYATLASRDVDCCLIPESPFYLEGEGGLFEFIERRLKDHGHMVIVLAEGAGQDLMCKSMESTPMDASGNKLLKDVGLWLSQSIKDHFKKNKMVMNLKYIDPTYMIRAVPSNASDNVYCTLLAQSAVHGAMAGYTGYTSGLVNGRQTYIPFYRITETQNNVVITDRMWARLLSSTNQPSFLGPKDTSEEKKELPETPLLDDGAVDIPPVTKEVTK</sequence>
<accession>Q9C5J7</accession>
<accession>Q9FJU5</accession>
<comment type="function">
    <text evidence="1">Catalyzes the phosphorylation of D-fructose 6-phosphate to fructose 1,6-bisphosphate by ATP, the first committing step of glycolysis.</text>
</comment>
<comment type="catalytic activity">
    <reaction evidence="1 3">
        <text>beta-D-fructose 6-phosphate + ATP = beta-D-fructose 1,6-bisphosphate + ADP + H(+)</text>
        <dbReference type="Rhea" id="RHEA:16109"/>
        <dbReference type="ChEBI" id="CHEBI:15378"/>
        <dbReference type="ChEBI" id="CHEBI:30616"/>
        <dbReference type="ChEBI" id="CHEBI:32966"/>
        <dbReference type="ChEBI" id="CHEBI:57634"/>
        <dbReference type="ChEBI" id="CHEBI:456216"/>
        <dbReference type="EC" id="2.7.1.11"/>
    </reaction>
</comment>
<comment type="cofactor">
    <cofactor evidence="1">
        <name>Mg(2+)</name>
        <dbReference type="ChEBI" id="CHEBI:18420"/>
    </cofactor>
</comment>
<comment type="activity regulation">
    <text evidence="1">Allosterically activated by AMP.</text>
</comment>
<comment type="pathway">
    <text evidence="1">Carbohydrate degradation; glycolysis; D-glyceraldehyde 3-phosphate and glycerone phosphate from D-glucose: step 3/4.</text>
</comment>
<comment type="subunit">
    <text evidence="1">Homotetramer.</text>
</comment>
<comment type="subcellular location">
    <subcellularLocation>
        <location evidence="1 3">Cytoplasm</location>
    </subcellularLocation>
</comment>
<comment type="tissue specificity">
    <text evidence="3">Expressed in roots, leaves, stems and flowers.</text>
</comment>
<comment type="similarity">
    <text evidence="1">Belongs to the phosphofructokinase type A (PFKA) family. PPi-dependent PFK group II subfamily. Atypical ATP-dependent clade 'X' sub-subfamily.</text>
</comment>
<comment type="sequence caution" evidence="4">
    <conflict type="erroneous gene model prediction">
        <sequence resource="EMBL-CDS" id="BAB09881"/>
    </conflict>
</comment>
<dbReference type="EC" id="2.7.1.11" evidence="1"/>
<dbReference type="EMBL" id="AB013392">
    <property type="protein sequence ID" value="BAB09881.1"/>
    <property type="status" value="ALT_SEQ"/>
    <property type="molecule type" value="Genomic_DNA"/>
</dbReference>
<dbReference type="EMBL" id="CP002688">
    <property type="protein sequence ID" value="AED96790.1"/>
    <property type="molecule type" value="Genomic_DNA"/>
</dbReference>
<dbReference type="EMBL" id="AF360207">
    <property type="protein sequence ID" value="AAK25917.1"/>
    <property type="molecule type" value="mRNA"/>
</dbReference>
<dbReference type="EMBL" id="AY040055">
    <property type="protein sequence ID" value="AAK64113.1"/>
    <property type="molecule type" value="mRNA"/>
</dbReference>
<dbReference type="RefSeq" id="NP_568842.1">
    <property type="nucleotide sequence ID" value="NM_125046.3"/>
</dbReference>
<dbReference type="SMR" id="Q9C5J7"/>
<dbReference type="BioGRID" id="21008">
    <property type="interactions" value="5"/>
</dbReference>
<dbReference type="FunCoup" id="Q9C5J7">
    <property type="interactions" value="886"/>
</dbReference>
<dbReference type="IntAct" id="Q9C5J7">
    <property type="interactions" value="7"/>
</dbReference>
<dbReference type="STRING" id="3702.Q9C5J7"/>
<dbReference type="iPTMnet" id="Q9C5J7"/>
<dbReference type="MetOSite" id="Q9C5J7"/>
<dbReference type="PaxDb" id="3702-AT5G56630.1"/>
<dbReference type="ProteomicsDB" id="236150"/>
<dbReference type="DNASU" id="835764"/>
<dbReference type="EnsemblPlants" id="AT5G56630.1">
    <property type="protein sequence ID" value="AT5G56630.1"/>
    <property type="gene ID" value="AT5G56630"/>
</dbReference>
<dbReference type="GeneID" id="835764"/>
<dbReference type="Gramene" id="AT5G56630.1">
    <property type="protein sequence ID" value="AT5G56630.1"/>
    <property type="gene ID" value="AT5G56630"/>
</dbReference>
<dbReference type="KEGG" id="ath:AT5G56630"/>
<dbReference type="Araport" id="AT5G56630"/>
<dbReference type="TAIR" id="AT5G56630">
    <property type="gene designation" value="PFK7"/>
</dbReference>
<dbReference type="eggNOG" id="KOG2440">
    <property type="taxonomic scope" value="Eukaryota"/>
</dbReference>
<dbReference type="HOGENOM" id="CLU_020655_7_2_1"/>
<dbReference type="InParanoid" id="Q9C5J7"/>
<dbReference type="OMA" id="VIHEEIR"/>
<dbReference type="PhylomeDB" id="Q9C5J7"/>
<dbReference type="BioCyc" id="ARA:AT5G56630-MONOMER"/>
<dbReference type="BRENDA" id="2.7.1.11">
    <property type="organism ID" value="399"/>
</dbReference>
<dbReference type="UniPathway" id="UPA00109">
    <property type="reaction ID" value="UER00182"/>
</dbReference>
<dbReference type="CD-CODE" id="4299E36E">
    <property type="entry name" value="Nucleolus"/>
</dbReference>
<dbReference type="PRO" id="PR:Q9C5J7"/>
<dbReference type="Proteomes" id="UP000006548">
    <property type="component" value="Chromosome 5"/>
</dbReference>
<dbReference type="ExpressionAtlas" id="Q9C5J7">
    <property type="expression patterns" value="baseline and differential"/>
</dbReference>
<dbReference type="GO" id="GO:0005829">
    <property type="term" value="C:cytosol"/>
    <property type="evidence" value="ECO:0000314"/>
    <property type="project" value="TAIR"/>
</dbReference>
<dbReference type="GO" id="GO:0003872">
    <property type="term" value="F:6-phosphofructokinase activity"/>
    <property type="evidence" value="ECO:0000314"/>
    <property type="project" value="TAIR"/>
</dbReference>
<dbReference type="GO" id="GO:0005524">
    <property type="term" value="F:ATP binding"/>
    <property type="evidence" value="ECO:0007669"/>
    <property type="project" value="UniProtKB-KW"/>
</dbReference>
<dbReference type="GO" id="GO:0046872">
    <property type="term" value="F:metal ion binding"/>
    <property type="evidence" value="ECO:0007669"/>
    <property type="project" value="UniProtKB-KW"/>
</dbReference>
<dbReference type="GO" id="GO:0006002">
    <property type="term" value="P:fructose 6-phosphate metabolic process"/>
    <property type="evidence" value="ECO:0007669"/>
    <property type="project" value="InterPro"/>
</dbReference>
<dbReference type="GO" id="GO:0006096">
    <property type="term" value="P:glycolytic process"/>
    <property type="evidence" value="ECO:0000314"/>
    <property type="project" value="TAIR"/>
</dbReference>
<dbReference type="FunFam" id="3.40.50.450:FF:000002">
    <property type="entry name" value="ATP-dependent 6-phosphofructokinase"/>
    <property type="match status" value="1"/>
</dbReference>
<dbReference type="FunFam" id="3.40.50.460:FF:000018">
    <property type="entry name" value="Phosphofructokinase"/>
    <property type="match status" value="1"/>
</dbReference>
<dbReference type="Gene3D" id="3.40.50.450">
    <property type="match status" value="1"/>
</dbReference>
<dbReference type="HAMAP" id="MF_01981">
    <property type="entry name" value="Phosphofructokinase_II_X"/>
    <property type="match status" value="1"/>
</dbReference>
<dbReference type="InterPro" id="IPR022953">
    <property type="entry name" value="ATP_PFK"/>
</dbReference>
<dbReference type="InterPro" id="IPR050929">
    <property type="entry name" value="PFKA"/>
</dbReference>
<dbReference type="InterPro" id="IPR000023">
    <property type="entry name" value="Phosphofructokinase_dom"/>
</dbReference>
<dbReference type="InterPro" id="IPR035966">
    <property type="entry name" value="PKF_sf"/>
</dbReference>
<dbReference type="InterPro" id="IPR012004">
    <property type="entry name" value="PyroP-dep_PFK_TP0108"/>
</dbReference>
<dbReference type="NCBIfam" id="NF005301">
    <property type="entry name" value="PRK06830.1"/>
    <property type="match status" value="1"/>
</dbReference>
<dbReference type="PANTHER" id="PTHR45770">
    <property type="entry name" value="ATP-DEPENDENT 6-PHOSPHOFRUCTOKINASE 1"/>
    <property type="match status" value="1"/>
</dbReference>
<dbReference type="Pfam" id="PF00365">
    <property type="entry name" value="PFK"/>
    <property type="match status" value="1"/>
</dbReference>
<dbReference type="PIRSF" id="PIRSF000534">
    <property type="entry name" value="PPi_PFK_TP0108"/>
    <property type="match status" value="1"/>
</dbReference>
<dbReference type="PRINTS" id="PR00476">
    <property type="entry name" value="PHFRCTKINASE"/>
</dbReference>
<dbReference type="SUPFAM" id="SSF53784">
    <property type="entry name" value="Phosphofructokinase"/>
    <property type="match status" value="1"/>
</dbReference>
<protein>
    <recommendedName>
        <fullName evidence="1">ATP-dependent 6-phosphofructokinase 7</fullName>
        <shortName evidence="1">ATP-PFK 7</shortName>
        <shortName evidence="1">Phosphofructokinase 7</shortName>
        <ecNumber evidence="1">2.7.1.11</ecNumber>
    </recommendedName>
    <alternativeName>
        <fullName evidence="1">Phosphohexokinase 7</fullName>
    </alternativeName>
</protein>
<reference key="1">
    <citation type="journal article" date="1998" name="DNA Res.">
        <title>Structural analysis of Arabidopsis thaliana chromosome 5. VI. Sequence features of the regions of 1,367,185 bp covered by 19 physically assigned P1 and TAC clones.</title>
        <authorList>
            <person name="Kotani H."/>
            <person name="Nakamura Y."/>
            <person name="Sato S."/>
            <person name="Asamizu E."/>
            <person name="Kaneko T."/>
            <person name="Miyajima N."/>
            <person name="Tabata S."/>
        </authorList>
    </citation>
    <scope>NUCLEOTIDE SEQUENCE [LARGE SCALE GENOMIC DNA]</scope>
    <source>
        <strain>cv. Columbia</strain>
    </source>
</reference>
<reference key="2">
    <citation type="journal article" date="2017" name="Plant J.">
        <title>Araport11: a complete reannotation of the Arabidopsis thaliana reference genome.</title>
        <authorList>
            <person name="Cheng C.Y."/>
            <person name="Krishnakumar V."/>
            <person name="Chan A.P."/>
            <person name="Thibaud-Nissen F."/>
            <person name="Schobel S."/>
            <person name="Town C.D."/>
        </authorList>
    </citation>
    <scope>GENOME REANNOTATION</scope>
    <source>
        <strain>cv. Columbia</strain>
    </source>
</reference>
<reference key="3">
    <citation type="journal article" date="2003" name="Science">
        <title>Empirical analysis of transcriptional activity in the Arabidopsis genome.</title>
        <authorList>
            <person name="Yamada K."/>
            <person name="Lim J."/>
            <person name="Dale J.M."/>
            <person name="Chen H."/>
            <person name="Shinn P."/>
            <person name="Palm C.J."/>
            <person name="Southwick A.M."/>
            <person name="Wu H.C."/>
            <person name="Kim C.J."/>
            <person name="Nguyen M."/>
            <person name="Pham P.K."/>
            <person name="Cheuk R.F."/>
            <person name="Karlin-Newmann G."/>
            <person name="Liu S.X."/>
            <person name="Lam B."/>
            <person name="Sakano H."/>
            <person name="Wu T."/>
            <person name="Yu G."/>
            <person name="Miranda M."/>
            <person name="Quach H.L."/>
            <person name="Tripp M."/>
            <person name="Chang C.H."/>
            <person name="Lee J.M."/>
            <person name="Toriumi M.J."/>
            <person name="Chan M.M."/>
            <person name="Tang C.C."/>
            <person name="Onodera C.S."/>
            <person name="Deng J.M."/>
            <person name="Akiyama K."/>
            <person name="Ansari Y."/>
            <person name="Arakawa T."/>
            <person name="Banh J."/>
            <person name="Banno F."/>
            <person name="Bowser L."/>
            <person name="Brooks S.Y."/>
            <person name="Carninci P."/>
            <person name="Chao Q."/>
            <person name="Choy N."/>
            <person name="Enju A."/>
            <person name="Goldsmith A.D."/>
            <person name="Gurjal M."/>
            <person name="Hansen N.F."/>
            <person name="Hayashizaki Y."/>
            <person name="Johnson-Hopson C."/>
            <person name="Hsuan V.W."/>
            <person name="Iida K."/>
            <person name="Karnes M."/>
            <person name="Khan S."/>
            <person name="Koesema E."/>
            <person name="Ishida J."/>
            <person name="Jiang P.X."/>
            <person name="Jones T."/>
            <person name="Kawai J."/>
            <person name="Kamiya A."/>
            <person name="Meyers C."/>
            <person name="Nakajima M."/>
            <person name="Narusaka M."/>
            <person name="Seki M."/>
            <person name="Sakurai T."/>
            <person name="Satou M."/>
            <person name="Tamse R."/>
            <person name="Vaysberg M."/>
            <person name="Wallender E.K."/>
            <person name="Wong C."/>
            <person name="Yamamura Y."/>
            <person name="Yuan S."/>
            <person name="Shinozaki K."/>
            <person name="Davis R.W."/>
            <person name="Theologis A."/>
            <person name="Ecker J.R."/>
        </authorList>
    </citation>
    <scope>NUCLEOTIDE SEQUENCE [LARGE SCALE MRNA]</scope>
    <source>
        <strain>cv. Columbia</strain>
    </source>
</reference>
<reference key="4">
    <citation type="journal article" date="2007" name="FEBS Lett.">
        <title>Characterisation of the ATP-dependent phosphofructokinase gene family from Arabidopsis thaliana.</title>
        <authorList>
            <person name="Mustroph A."/>
            <person name="Sonnewald U."/>
            <person name="Biemelt S."/>
        </authorList>
    </citation>
    <scope>CATALYTIC ACTIVITY</scope>
    <scope>TISSUE SPECIFICITY</scope>
    <scope>SUBCELLULAR LOCATION</scope>
    <scope>GENE FAMILY</scope>
    <scope>NOMENCLATURE</scope>
</reference>
<proteinExistence type="evidence at protein level"/>
<name>PFKA7_ARATH</name>